<organismHost>
    <name type="scientific">Lactobacillus delbrueckii</name>
    <dbReference type="NCBI Taxonomy" id="1584"/>
</organismHost>
<accession>Q04763</accession>
<dbReference type="EMBL" id="EF455602">
    <property type="protein sequence ID" value="AAC00560.1"/>
    <property type="molecule type" value="Genomic_DNA"/>
</dbReference>
<dbReference type="PIR" id="B45691">
    <property type="entry name" value="B45691"/>
</dbReference>
<dbReference type="SMR" id="Q04763"/>
<dbReference type="KEGG" id="vg:5220424"/>
<dbReference type="OrthoDB" id="30887at10239"/>
<dbReference type="Proteomes" id="UP000001922">
    <property type="component" value="Genome"/>
</dbReference>
<dbReference type="GO" id="GO:0019069">
    <property type="term" value="P:viral capsid assembly"/>
    <property type="evidence" value="ECO:0007669"/>
    <property type="project" value="InterPro"/>
</dbReference>
<dbReference type="InterPro" id="IPR009636">
    <property type="entry name" value="SCAF"/>
</dbReference>
<dbReference type="Pfam" id="PF06810">
    <property type="entry name" value="Phage_scaffold"/>
    <property type="match status" value="1"/>
</dbReference>
<comment type="function">
    <text evidence="1">Scaffolding protein involved in the icosahedric procapsid assembly. Coassembles with the capsid proteins to form the procapsid, in which the scaffolding protein is found within the external shell of icosahedrally arranged capsid protein subunits. In a subsequent step the scaffolding protein molecules are released from the procapsid.</text>
</comment>
<comment type="subunit">
    <text evidence="1">Homodimer.</text>
</comment>
<comment type="similarity">
    <text evidence="2">Belongs to the SPP1-like scaffolding protein family.</text>
</comment>
<feature type="chain" id="PRO_0000065789" description="Capsid assembly scaffolding protein">
    <location>
        <begin position="1"/>
        <end position="178"/>
    </location>
</feature>
<proteinExistence type="inferred from homology"/>
<sequence length="178" mass="19612">MERKFLTDLGLNPDQVNSIMAQYGKDMQEYEGLEAERDALKKTSSELSSKIEDLKANSANVEELTKQIEKLKSDNENATKQLNAQKLDFAVTSTIKDFGAKNAKAVKALLNHDDIRFDSKGNLIGLEDQLKSLKDSDSYLFAEDKPAGKPIQAFPTGNPVAGGKDVSLHQKIAQRLKG</sequence>
<evidence type="ECO:0000250" key="1">
    <source>
        <dbReference type="UniProtKB" id="Q38580"/>
    </source>
</evidence>
<evidence type="ECO:0000305" key="2"/>
<keyword id="KW-1185">Reference proteome</keyword>
<keyword id="KW-0118">Viral capsid assembly</keyword>
<keyword id="KW-1188">Viral release from host cell</keyword>
<name>SCAF_BPLLH</name>
<organism>
    <name type="scientific">Lactococcus phage LL-H</name>
    <name type="common">Lactococcus delbrueckii bacteriophage LL-H</name>
    <dbReference type="NCBI Taxonomy" id="12348"/>
    <lineage>
        <taxon>Viruses</taxon>
        <taxon>Duplodnaviria</taxon>
        <taxon>Heunggongvirae</taxon>
        <taxon>Uroviricota</taxon>
        <taxon>Caudoviricetes</taxon>
    </lineage>
</organism>
<protein>
    <recommendedName>
        <fullName>Capsid assembly scaffolding protein</fullName>
    </recommendedName>
    <alternativeName>
        <fullName>Head morphogenesis protein</fullName>
    </alternativeName>
    <alternativeName>
        <fullName>Minor structural protein Gp20</fullName>
    </alternativeName>
    <alternativeName>
        <fullName>ORF2 protein</fullName>
    </alternativeName>
    <alternativeName>
        <fullName>Scaffold protein</fullName>
    </alternativeName>
</protein>
<gene>
    <name type="primary">g20</name>
</gene>
<reference key="1">
    <citation type="journal article" date="1993" name="J. Virol.">
        <title>Molecular comparison of the structural proteins encoding gene clusters of two related Lactobacillus delbrueckii bacteriophages.</title>
        <authorList>
            <person name="Vasala A."/>
            <person name="Dupont L."/>
            <person name="Baumann M."/>
            <person name="Ritzenthaler P."/>
            <person name="Alatossava T."/>
        </authorList>
    </citation>
    <scope>NUCLEOTIDE SEQUENCE [GENOMIC DNA]</scope>
</reference>